<name>Y1813_ACIB3</name>
<evidence type="ECO:0000255" key="1">
    <source>
        <dbReference type="HAMAP-Rule" id="MF_00274"/>
    </source>
</evidence>
<protein>
    <recommendedName>
        <fullName evidence="1">Nucleoid-associated protein ABBFA_001813</fullName>
    </recommendedName>
</protein>
<organism>
    <name type="scientific">Acinetobacter baumannii (strain AB307-0294)</name>
    <dbReference type="NCBI Taxonomy" id="557600"/>
    <lineage>
        <taxon>Bacteria</taxon>
        <taxon>Pseudomonadati</taxon>
        <taxon>Pseudomonadota</taxon>
        <taxon>Gammaproteobacteria</taxon>
        <taxon>Moraxellales</taxon>
        <taxon>Moraxellaceae</taxon>
        <taxon>Acinetobacter</taxon>
        <taxon>Acinetobacter calcoaceticus/baumannii complex</taxon>
    </lineage>
</organism>
<gene>
    <name type="ordered locus">ABBFA_001813</name>
</gene>
<proteinExistence type="inferred from homology"/>
<keyword id="KW-0963">Cytoplasm</keyword>
<keyword id="KW-0238">DNA-binding</keyword>
<sequence length="109" mass="12015">MNINMLMQQAQRMQKDMESNIKKAKEELAQTEVHAEAGGGLVKVTMTGRYIVKRIEINPELLQDEPDMIEDLIAAAVNDAVRQAEVVSEEKMQKANSGMGLPPGLAGMF</sequence>
<comment type="function">
    <text evidence="1">Binds to DNA and alters its conformation. May be involved in regulation of gene expression, nucleoid organization and DNA protection.</text>
</comment>
<comment type="subunit">
    <text evidence="1">Homodimer.</text>
</comment>
<comment type="subcellular location">
    <subcellularLocation>
        <location evidence="1">Cytoplasm</location>
        <location evidence="1">Nucleoid</location>
    </subcellularLocation>
</comment>
<comment type="similarity">
    <text evidence="1">Belongs to the YbaB/EbfC family.</text>
</comment>
<accession>B7H3B8</accession>
<dbReference type="EMBL" id="CP001172">
    <property type="protein sequence ID" value="ACJ57804.1"/>
    <property type="molecule type" value="Genomic_DNA"/>
</dbReference>
<dbReference type="RefSeq" id="WP_001024697.1">
    <property type="nucleotide sequence ID" value="NZ_CP001172.1"/>
</dbReference>
<dbReference type="SMR" id="B7H3B8"/>
<dbReference type="HOGENOM" id="CLU_140930_0_0_6"/>
<dbReference type="Proteomes" id="UP000006924">
    <property type="component" value="Chromosome"/>
</dbReference>
<dbReference type="GO" id="GO:0043590">
    <property type="term" value="C:bacterial nucleoid"/>
    <property type="evidence" value="ECO:0007669"/>
    <property type="project" value="UniProtKB-UniRule"/>
</dbReference>
<dbReference type="GO" id="GO:0005829">
    <property type="term" value="C:cytosol"/>
    <property type="evidence" value="ECO:0007669"/>
    <property type="project" value="TreeGrafter"/>
</dbReference>
<dbReference type="GO" id="GO:0003677">
    <property type="term" value="F:DNA binding"/>
    <property type="evidence" value="ECO:0007669"/>
    <property type="project" value="UniProtKB-UniRule"/>
</dbReference>
<dbReference type="Gene3D" id="3.30.1310.10">
    <property type="entry name" value="Nucleoid-associated protein YbaB-like domain"/>
    <property type="match status" value="1"/>
</dbReference>
<dbReference type="HAMAP" id="MF_00274">
    <property type="entry name" value="DNA_YbaB_EbfC"/>
    <property type="match status" value="1"/>
</dbReference>
<dbReference type="InterPro" id="IPR036894">
    <property type="entry name" value="YbaB-like_sf"/>
</dbReference>
<dbReference type="InterPro" id="IPR004401">
    <property type="entry name" value="YbaB/EbfC"/>
</dbReference>
<dbReference type="NCBIfam" id="TIGR00103">
    <property type="entry name" value="DNA_YbaB_EbfC"/>
    <property type="match status" value="1"/>
</dbReference>
<dbReference type="PANTHER" id="PTHR33449">
    <property type="entry name" value="NUCLEOID-ASSOCIATED PROTEIN YBAB"/>
    <property type="match status" value="1"/>
</dbReference>
<dbReference type="PANTHER" id="PTHR33449:SF1">
    <property type="entry name" value="NUCLEOID-ASSOCIATED PROTEIN YBAB"/>
    <property type="match status" value="1"/>
</dbReference>
<dbReference type="Pfam" id="PF02575">
    <property type="entry name" value="YbaB_DNA_bd"/>
    <property type="match status" value="1"/>
</dbReference>
<dbReference type="PIRSF" id="PIRSF004555">
    <property type="entry name" value="UCP004555"/>
    <property type="match status" value="1"/>
</dbReference>
<dbReference type="SUPFAM" id="SSF82607">
    <property type="entry name" value="YbaB-like"/>
    <property type="match status" value="1"/>
</dbReference>
<feature type="chain" id="PRO_1000119306" description="Nucleoid-associated protein ABBFA_001813">
    <location>
        <begin position="1"/>
        <end position="109"/>
    </location>
</feature>
<reference key="1">
    <citation type="journal article" date="2008" name="J. Bacteriol.">
        <title>Comparative genome sequence analysis of multidrug-resistant Acinetobacter baumannii.</title>
        <authorList>
            <person name="Adams M.D."/>
            <person name="Goglin K."/>
            <person name="Molyneaux N."/>
            <person name="Hujer K.M."/>
            <person name="Lavender H."/>
            <person name="Jamison J.J."/>
            <person name="MacDonald I.J."/>
            <person name="Martin K.M."/>
            <person name="Russo T."/>
            <person name="Campagnari A.A."/>
            <person name="Hujer A.M."/>
            <person name="Bonomo R.A."/>
            <person name="Gill S.R."/>
        </authorList>
    </citation>
    <scope>NUCLEOTIDE SEQUENCE [LARGE SCALE GENOMIC DNA]</scope>
    <source>
        <strain>AB307-0294</strain>
    </source>
</reference>